<protein>
    <recommendedName>
        <fullName>Protein disulfide isomerase-like 1-4</fullName>
        <shortName>AtPDIL1-4</shortName>
        <ecNumber>5.3.4.1</ecNumber>
    </recommendedName>
    <alternativeName>
        <fullName>Protein disulfide isomerase 2</fullName>
        <shortName>AtPDI2</shortName>
    </alternativeName>
    <alternativeName>
        <fullName>Protein disulfide isomerase-like 2-2</fullName>
        <shortName>AtPDIL2-2</shortName>
    </alternativeName>
</protein>
<organism>
    <name type="scientific">Arabidopsis thaliana</name>
    <name type="common">Mouse-ear cress</name>
    <dbReference type="NCBI Taxonomy" id="3702"/>
    <lineage>
        <taxon>Eukaryota</taxon>
        <taxon>Viridiplantae</taxon>
        <taxon>Streptophyta</taxon>
        <taxon>Embryophyta</taxon>
        <taxon>Tracheophyta</taxon>
        <taxon>Spermatophyta</taxon>
        <taxon>Magnoliopsida</taxon>
        <taxon>eudicotyledons</taxon>
        <taxon>Gunneridae</taxon>
        <taxon>Pentapetalae</taxon>
        <taxon>rosids</taxon>
        <taxon>malvids</taxon>
        <taxon>Brassicales</taxon>
        <taxon>Brassicaceae</taxon>
        <taxon>Camelineae</taxon>
        <taxon>Arabidopsis</taxon>
    </lineage>
</organism>
<reference key="1">
    <citation type="journal article" date="1997" name="DNA Res.">
        <title>Structural analysis of Arabidopsis thaliana chromosome 5. I. Sequence features of the 1.6 Mb regions covered by twenty physically assigned P1 clones.</title>
        <authorList>
            <person name="Sato S."/>
            <person name="Kotani H."/>
            <person name="Nakamura Y."/>
            <person name="Kaneko T."/>
            <person name="Asamizu E."/>
            <person name="Fukami M."/>
            <person name="Miyajima N."/>
            <person name="Tabata S."/>
        </authorList>
    </citation>
    <scope>NUCLEOTIDE SEQUENCE [LARGE SCALE GENOMIC DNA]</scope>
    <source>
        <strain>cv. Columbia</strain>
    </source>
</reference>
<reference key="2">
    <citation type="journal article" date="2017" name="Plant J.">
        <title>Araport11: a complete reannotation of the Arabidopsis thaliana reference genome.</title>
        <authorList>
            <person name="Cheng C.Y."/>
            <person name="Krishnakumar V."/>
            <person name="Chan A.P."/>
            <person name="Thibaud-Nissen F."/>
            <person name="Schobel S."/>
            <person name="Town C.D."/>
        </authorList>
    </citation>
    <scope>GENOME REANNOTATION</scope>
    <source>
        <strain>cv. Columbia</strain>
    </source>
</reference>
<reference key="3">
    <citation type="journal article" date="2003" name="Science">
        <title>Empirical analysis of transcriptional activity in the Arabidopsis genome.</title>
        <authorList>
            <person name="Yamada K."/>
            <person name="Lim J."/>
            <person name="Dale J.M."/>
            <person name="Chen H."/>
            <person name="Shinn P."/>
            <person name="Palm C.J."/>
            <person name="Southwick A.M."/>
            <person name="Wu H.C."/>
            <person name="Kim C.J."/>
            <person name="Nguyen M."/>
            <person name="Pham P.K."/>
            <person name="Cheuk R.F."/>
            <person name="Karlin-Newmann G."/>
            <person name="Liu S.X."/>
            <person name="Lam B."/>
            <person name="Sakano H."/>
            <person name="Wu T."/>
            <person name="Yu G."/>
            <person name="Miranda M."/>
            <person name="Quach H.L."/>
            <person name="Tripp M."/>
            <person name="Chang C.H."/>
            <person name="Lee J.M."/>
            <person name="Toriumi M.J."/>
            <person name="Chan M.M."/>
            <person name="Tang C.C."/>
            <person name="Onodera C.S."/>
            <person name="Deng J.M."/>
            <person name="Akiyama K."/>
            <person name="Ansari Y."/>
            <person name="Arakawa T."/>
            <person name="Banh J."/>
            <person name="Banno F."/>
            <person name="Bowser L."/>
            <person name="Brooks S.Y."/>
            <person name="Carninci P."/>
            <person name="Chao Q."/>
            <person name="Choy N."/>
            <person name="Enju A."/>
            <person name="Goldsmith A.D."/>
            <person name="Gurjal M."/>
            <person name="Hansen N.F."/>
            <person name="Hayashizaki Y."/>
            <person name="Johnson-Hopson C."/>
            <person name="Hsuan V.W."/>
            <person name="Iida K."/>
            <person name="Karnes M."/>
            <person name="Khan S."/>
            <person name="Koesema E."/>
            <person name="Ishida J."/>
            <person name="Jiang P.X."/>
            <person name="Jones T."/>
            <person name="Kawai J."/>
            <person name="Kamiya A."/>
            <person name="Meyers C."/>
            <person name="Nakajima M."/>
            <person name="Narusaka M."/>
            <person name="Seki M."/>
            <person name="Sakurai T."/>
            <person name="Satou M."/>
            <person name="Tamse R."/>
            <person name="Vaysberg M."/>
            <person name="Wallender E.K."/>
            <person name="Wong C."/>
            <person name="Yamamura Y."/>
            <person name="Yuan S."/>
            <person name="Shinozaki K."/>
            <person name="Davis R.W."/>
            <person name="Theologis A."/>
            <person name="Ecker J.R."/>
        </authorList>
    </citation>
    <scope>NUCLEOTIDE SEQUENCE [LARGE SCALE MRNA]</scope>
    <source>
        <strain>cv. Columbia</strain>
    </source>
</reference>
<reference key="4">
    <citation type="submission" date="2002-03" db="EMBL/GenBank/DDBJ databases">
        <title>Full-length cDNA from Arabidopsis thaliana.</title>
        <authorList>
            <person name="Brover V.V."/>
            <person name="Troukhan M.E."/>
            <person name="Alexandrov N.A."/>
            <person name="Lu Y.-P."/>
            <person name="Flavell R.B."/>
            <person name="Feldmann K.A."/>
        </authorList>
    </citation>
    <scope>NUCLEOTIDE SEQUENCE [LARGE SCALE MRNA]</scope>
</reference>
<reference key="5">
    <citation type="journal article" date="2005" name="Plant Physiol.">
        <title>Phylogenetic analyses identify 10 classes of the protein disulfide isomerase family in plants, including single-domain protein disulfide isomerase-related proteins.</title>
        <authorList>
            <person name="Houston N.L."/>
            <person name="Fan C."/>
            <person name="Xiang J.Q."/>
            <person name="Schulze J.M."/>
            <person name="Jung R."/>
            <person name="Boston R.S."/>
        </authorList>
    </citation>
    <scope>GENE FAMILY</scope>
    <scope>NOMENCLATURE</scope>
</reference>
<reference key="6">
    <citation type="journal article" date="2008" name="Mol. Genet. Genomics">
        <title>Endoplasmic reticulum stress activates the expression of a sub-group of protein disulfide isomerase genes and AtbZIP60 modulates the response in Arabidopsis thaliana.</title>
        <authorList>
            <person name="Lu D.-P."/>
            <person name="Christopher D.A."/>
        </authorList>
    </citation>
    <scope>TISSUE SPECIFICITY</scope>
</reference>
<reference key="7">
    <citation type="journal article" date="2010" name="BMC Plant Biol.">
        <title>The protein disulfide isomerase gene family in bread wheat (T. aestivum L.).</title>
        <authorList>
            <person name="d'Aloisio E."/>
            <person name="Paolacci A.R."/>
            <person name="Dhanapal A.P."/>
            <person name="Tanzarella O.A."/>
            <person name="Porceddu E."/>
            <person name="Ciaffi M."/>
        </authorList>
    </citation>
    <scope>GENE FAMILY</scope>
    <scope>NOMENCLATURE</scope>
</reference>
<reference key="8">
    <citation type="journal article" date="2011" name="Mol. Cells">
        <title>Protein disulfide isomerase-2 of Arabidopsis mediates protein folding and localizes to both the secretory pathway and nucleus, where it interacts with maternal effect embryo arrest factor.</title>
        <authorList>
            <person name="Cho E.J."/>
            <person name="Yuen C.Y."/>
            <person name="Kang B.H."/>
            <person name="Ondzighi C.A."/>
            <person name="Staehelin L.A."/>
            <person name="Christopher D.A."/>
        </authorList>
    </citation>
    <scope>FUNCTION</scope>
    <scope>INTERACTION WITH MEE8 AND MED37A/BIP1</scope>
    <scope>SUBCELLULAR LOCATION</scope>
    <scope>TISSUE SPECIFICITY</scope>
    <scope>DISRUPTION PHENOTYPE</scope>
</reference>
<sequence>MAFRVLLLFSLTALLIFSAVSPSFAASSSDDVDDEDLSFLEDLKEDDVPGADSLSSSTGFDEFEGGEEEDPDMYNDDDDEEGDFSDLGNPDSDPLPTPEIDEKDVVVIKERNFTDVIENNQYVLVEFYAPWCGHCQSLAPEYAAAATELKEDGVVLAKIDATEENELAQEYRVQGFPTLLFFVDGEHKPYTGGRTKETIVTWVKKKIGPGVYNLTTLDDAEKVLTSGNKVVLGYLNSLVGVEHDQLNAASKAEDDVNFYQTVNPDVAKMFHLDPESKRPALVLVKKEEEKISHFDGEFVKSALVSFVSANKLALVSVFTRETAPEIFESAIKKQLLLFVTKNESEKVLTEFQEAAKSFKGKLIFVSVDLDNEDYGKPVAEYFGVSGNGPKLIGYTGNEDPKKYFFDGEIQSDKIKIFGEDFLNDKLKPFYKSDPIPEKNDEDVKIVVGDNFDEIVLDDSKDVLLEVYAPWCGHCQALEPMYNKLAKHLRSIDSLVITKMDGTTNEHPKAKAEGFPTILFFPAGNKTSEPITVDTDRTVVAFYKFLRKHATIPFKLEKPASTESPKTAESTPKVETTETKESPDSTTKSSQSDSKDEL</sequence>
<feature type="signal peptide" evidence="2">
    <location>
        <begin position="1"/>
        <end position="25"/>
    </location>
</feature>
<feature type="chain" id="PRO_0000400019" description="Protein disulfide isomerase-like 1-4">
    <location>
        <begin position="26"/>
        <end position="597"/>
    </location>
</feature>
<feature type="domain" description="Thioredoxin 1" evidence="3">
    <location>
        <begin position="85"/>
        <end position="208"/>
    </location>
</feature>
<feature type="domain" description="Thioredoxin 2" evidence="3">
    <location>
        <begin position="429"/>
        <end position="550"/>
    </location>
</feature>
<feature type="region of interest" description="Disordered" evidence="5">
    <location>
        <begin position="37"/>
        <end position="101"/>
    </location>
</feature>
<feature type="region of interest" description="Disordered" evidence="5">
    <location>
        <begin position="555"/>
        <end position="597"/>
    </location>
</feature>
<feature type="short sequence motif" description="Prevents secretion from ER" evidence="4">
    <location>
        <begin position="594"/>
        <end position="597"/>
    </location>
</feature>
<feature type="compositionally biased region" description="Acidic residues" evidence="5">
    <location>
        <begin position="37"/>
        <end position="49"/>
    </location>
</feature>
<feature type="compositionally biased region" description="Acidic residues" evidence="5">
    <location>
        <begin position="61"/>
        <end position="84"/>
    </location>
</feature>
<feature type="compositionally biased region" description="Polar residues" evidence="5">
    <location>
        <begin position="560"/>
        <end position="573"/>
    </location>
</feature>
<feature type="active site" description="Nucleophile" evidence="1">
    <location>
        <position position="132"/>
    </location>
</feature>
<feature type="active site" description="Nucleophile" evidence="1">
    <location>
        <position position="135"/>
    </location>
</feature>
<feature type="active site" description="Nucleophile" evidence="1">
    <location>
        <position position="471"/>
    </location>
</feature>
<feature type="active site" description="Nucleophile" evidence="1">
    <location>
        <position position="474"/>
    </location>
</feature>
<feature type="site" description="Contributes to redox potential value" evidence="1">
    <location>
        <position position="133"/>
    </location>
</feature>
<feature type="site" description="Contributes to redox potential value" evidence="1">
    <location>
        <position position="134"/>
    </location>
</feature>
<feature type="site" description="Lowers pKa of C-terminal Cys of first active site" evidence="1">
    <location>
        <position position="194"/>
    </location>
</feature>
<feature type="site" description="Contributes to redox potential value" evidence="1">
    <location>
        <position position="472"/>
    </location>
</feature>
<feature type="site" description="Contributes to redox potential value" evidence="1">
    <location>
        <position position="473"/>
    </location>
</feature>
<feature type="site" description="Lowers pKa of C-terminal Cys of second active site" evidence="1">
    <location>
        <position position="536"/>
    </location>
</feature>
<feature type="glycosylation site" description="N-linked (GlcNAc...) asparagine" evidence="2">
    <location>
        <position position="112"/>
    </location>
</feature>
<feature type="glycosylation site" description="N-linked (GlcNAc...) asparagine" evidence="2">
    <location>
        <position position="213"/>
    </location>
</feature>
<feature type="glycosylation site" description="N-linked (GlcNAc...) asparagine" evidence="2">
    <location>
        <position position="342"/>
    </location>
</feature>
<feature type="glycosylation site" description="N-linked (GlcNAc...) asparagine" evidence="2">
    <location>
        <position position="524"/>
    </location>
</feature>
<feature type="disulfide bond" description="Redox-active" evidence="3">
    <location>
        <begin position="132"/>
        <end position="135"/>
    </location>
</feature>
<feature type="disulfide bond" description="Redox-active" evidence="3">
    <location>
        <begin position="471"/>
        <end position="474"/>
    </location>
</feature>
<feature type="sequence conflict" description="In Ref. 4; AAM65262." evidence="8" ref="4">
    <original>P</original>
    <variation>H</variation>
    <location>
        <position position="400"/>
    </location>
</feature>
<comment type="function">
    <text evidence="7">Acts as a protein-folding catalyst that interacts with nascent polypeptides to catalyze the formation, isomerization, and reduction or oxidation of disulfide bonds.</text>
</comment>
<comment type="catalytic activity">
    <reaction>
        <text>Catalyzes the rearrangement of -S-S- bonds in proteins.</text>
        <dbReference type="EC" id="5.3.4.1"/>
    </reaction>
</comment>
<comment type="subunit">
    <text evidence="7">Interacts with MEE8 and MED37A.</text>
</comment>
<comment type="subcellular location">
    <subcellularLocation>
        <location evidence="4 7">Endoplasmic reticulum lumen</location>
    </subcellularLocation>
    <subcellularLocation>
        <location evidence="7">Golgi apparatus</location>
    </subcellularLocation>
    <subcellularLocation>
        <location evidence="7">Vacuole</location>
    </subcellularLocation>
    <subcellularLocation>
        <location evidence="7">Nucleus</location>
    </subcellularLocation>
    <subcellularLocation>
        <location evidence="7">Secreted</location>
        <location evidence="7">Cell wall</location>
    </subcellularLocation>
</comment>
<comment type="alternative products">
    <event type="alternative splicing"/>
    <isoform>
        <id>Q9FF55-1</id>
        <name>1</name>
        <sequence type="displayed"/>
    </isoform>
    <text>A number of isoforms are produced. According to EST sequences.</text>
</comment>
<comment type="tissue specificity">
    <text evidence="6 7">Expressed in germinating seedling, including the cotyledons and hypocotyl, in vascular tissues, in pollen grains, root tips, leaf trichomes, developing seeds and siliques.</text>
</comment>
<comment type="disruption phenotype">
    <text evidence="7">No visible phenotype, probably due to functional redundancy.</text>
</comment>
<comment type="similarity">
    <text evidence="8">Belongs to the protein disulfide isomerase family.</text>
</comment>
<proteinExistence type="evidence at protein level"/>
<gene>
    <name type="primary">PDIL1-4</name>
    <name type="synonym">PDI2</name>
    <name type="synonym">PDIL2-2</name>
    <name type="ordered locus">At5g60640</name>
    <name type="ORF">MUP24.6</name>
</gene>
<name>PDI14_ARATH</name>
<evidence type="ECO:0000250" key="1"/>
<evidence type="ECO:0000255" key="2"/>
<evidence type="ECO:0000255" key="3">
    <source>
        <dbReference type="PROSITE-ProRule" id="PRU00691"/>
    </source>
</evidence>
<evidence type="ECO:0000255" key="4">
    <source>
        <dbReference type="PROSITE-ProRule" id="PRU10138"/>
    </source>
</evidence>
<evidence type="ECO:0000256" key="5">
    <source>
        <dbReference type="SAM" id="MobiDB-lite"/>
    </source>
</evidence>
<evidence type="ECO:0000269" key="6">
    <source>
    </source>
</evidence>
<evidence type="ECO:0000269" key="7">
    <source>
    </source>
</evidence>
<evidence type="ECO:0000305" key="8"/>
<keyword id="KW-0025">Alternative splicing</keyword>
<keyword id="KW-0134">Cell wall</keyword>
<keyword id="KW-1015">Disulfide bond</keyword>
<keyword id="KW-0256">Endoplasmic reticulum</keyword>
<keyword id="KW-0325">Glycoprotein</keyword>
<keyword id="KW-0333">Golgi apparatus</keyword>
<keyword id="KW-0413">Isomerase</keyword>
<keyword id="KW-0539">Nucleus</keyword>
<keyword id="KW-0676">Redox-active center</keyword>
<keyword id="KW-1185">Reference proteome</keyword>
<keyword id="KW-0677">Repeat</keyword>
<keyword id="KW-0964">Secreted</keyword>
<keyword id="KW-0732">Signal</keyword>
<keyword id="KW-0926">Vacuole</keyword>
<accession>Q9FF55</accession>
<accession>Q8LAM5</accession>
<dbReference type="EC" id="5.3.4.1"/>
<dbReference type="EMBL" id="AB005246">
    <property type="protein sequence ID" value="BAB09837.1"/>
    <property type="molecule type" value="Genomic_DNA"/>
</dbReference>
<dbReference type="EMBL" id="CP002688">
    <property type="protein sequence ID" value="AED97360.1"/>
    <property type="molecule type" value="Genomic_DNA"/>
</dbReference>
<dbReference type="EMBL" id="BT001994">
    <property type="protein sequence ID" value="AAN72005.1"/>
    <property type="molecule type" value="mRNA"/>
</dbReference>
<dbReference type="EMBL" id="BT008359">
    <property type="protein sequence ID" value="AAP37718.1"/>
    <property type="molecule type" value="mRNA"/>
</dbReference>
<dbReference type="EMBL" id="AY087725">
    <property type="protein sequence ID" value="AAM65262.1"/>
    <property type="molecule type" value="mRNA"/>
</dbReference>
<dbReference type="RefSeq" id="NP_851234.1">
    <molecule id="Q9FF55-1"/>
    <property type="nucleotide sequence ID" value="NM_180903.4"/>
</dbReference>
<dbReference type="SMR" id="Q9FF55"/>
<dbReference type="BioGRID" id="21429">
    <property type="interactions" value="25"/>
</dbReference>
<dbReference type="FunCoup" id="Q9FF55">
    <property type="interactions" value="3363"/>
</dbReference>
<dbReference type="STRING" id="3702.Q9FF55"/>
<dbReference type="GlyCosmos" id="Q9FF55">
    <property type="glycosylation" value="4 sites, No reported glycans"/>
</dbReference>
<dbReference type="GlyGen" id="Q9FF55">
    <property type="glycosylation" value="5 sites"/>
</dbReference>
<dbReference type="iPTMnet" id="Q9FF55"/>
<dbReference type="SwissPalm" id="Q9FF55"/>
<dbReference type="PaxDb" id="3702-AT5G60640.1"/>
<dbReference type="ProteomicsDB" id="236290">
    <molecule id="Q9FF55-1"/>
</dbReference>
<dbReference type="EnsemblPlants" id="AT5G60640.1">
    <molecule id="Q9FF55-1"/>
    <property type="protein sequence ID" value="AT5G60640.1"/>
    <property type="gene ID" value="AT5G60640"/>
</dbReference>
<dbReference type="GeneID" id="836185"/>
<dbReference type="Gramene" id="AT5G60640.1">
    <molecule id="Q9FF55-1"/>
    <property type="protein sequence ID" value="AT5G60640.1"/>
    <property type="gene ID" value="AT5G60640"/>
</dbReference>
<dbReference type="KEGG" id="ath:AT5G60640"/>
<dbReference type="Araport" id="AT5G60640"/>
<dbReference type="TAIR" id="AT5G60640">
    <property type="gene designation" value="PDIL1-4"/>
</dbReference>
<dbReference type="eggNOG" id="KOG0190">
    <property type="taxonomic scope" value="Eukaryota"/>
</dbReference>
<dbReference type="InParanoid" id="Q9FF55"/>
<dbReference type="OrthoDB" id="427280at2759"/>
<dbReference type="PhylomeDB" id="Q9FF55"/>
<dbReference type="CD-CODE" id="4299E36E">
    <property type="entry name" value="Nucleolus"/>
</dbReference>
<dbReference type="PRO" id="PR:Q9FF55"/>
<dbReference type="Proteomes" id="UP000006548">
    <property type="component" value="Chromosome 5"/>
</dbReference>
<dbReference type="ExpressionAtlas" id="Q9FF55">
    <property type="expression patterns" value="baseline and differential"/>
</dbReference>
<dbReference type="GO" id="GO:0005783">
    <property type="term" value="C:endoplasmic reticulum"/>
    <property type="evidence" value="ECO:0000314"/>
    <property type="project" value="TAIR"/>
</dbReference>
<dbReference type="GO" id="GO:0005788">
    <property type="term" value="C:endoplasmic reticulum lumen"/>
    <property type="evidence" value="ECO:0007669"/>
    <property type="project" value="UniProtKB-SubCell"/>
</dbReference>
<dbReference type="GO" id="GO:0005576">
    <property type="term" value="C:extracellular region"/>
    <property type="evidence" value="ECO:0007669"/>
    <property type="project" value="UniProtKB-KW"/>
</dbReference>
<dbReference type="GO" id="GO:0005739">
    <property type="term" value="C:mitochondrion"/>
    <property type="evidence" value="ECO:0007005"/>
    <property type="project" value="TAIR"/>
</dbReference>
<dbReference type="GO" id="GO:0005634">
    <property type="term" value="C:nucleus"/>
    <property type="evidence" value="ECO:0007669"/>
    <property type="project" value="UniProtKB-SubCell"/>
</dbReference>
<dbReference type="GO" id="GO:0000325">
    <property type="term" value="C:plant-type vacuole"/>
    <property type="evidence" value="ECO:0007005"/>
    <property type="project" value="TAIR"/>
</dbReference>
<dbReference type="GO" id="GO:0009536">
    <property type="term" value="C:plastid"/>
    <property type="evidence" value="ECO:0007005"/>
    <property type="project" value="TAIR"/>
</dbReference>
<dbReference type="GO" id="GO:0099503">
    <property type="term" value="C:secretory vesicle"/>
    <property type="evidence" value="ECO:0007005"/>
    <property type="project" value="TAIR"/>
</dbReference>
<dbReference type="GO" id="GO:0003756">
    <property type="term" value="F:protein disulfide isomerase activity"/>
    <property type="evidence" value="ECO:0000250"/>
    <property type="project" value="TAIR"/>
</dbReference>
<dbReference type="CDD" id="cd02961">
    <property type="entry name" value="PDI_a_family"/>
    <property type="match status" value="1"/>
</dbReference>
<dbReference type="CDD" id="cd02995">
    <property type="entry name" value="PDI_a_PDI_a'_C"/>
    <property type="match status" value="1"/>
</dbReference>
<dbReference type="CDD" id="cd02982">
    <property type="entry name" value="PDI_b'_family"/>
    <property type="match status" value="1"/>
</dbReference>
<dbReference type="CDD" id="cd02981">
    <property type="entry name" value="PDI_b_family"/>
    <property type="match status" value="1"/>
</dbReference>
<dbReference type="FunFam" id="3.40.30.10:FF:000023">
    <property type="entry name" value="Protein disulfide-isomerase"/>
    <property type="match status" value="1"/>
</dbReference>
<dbReference type="FunFam" id="3.40.30.10:FF:000109">
    <property type="entry name" value="Protein disulfide-isomerase"/>
    <property type="match status" value="1"/>
</dbReference>
<dbReference type="FunFam" id="3.40.30.10:FF:000134">
    <property type="entry name" value="Protein disulfide-isomerase"/>
    <property type="match status" value="1"/>
</dbReference>
<dbReference type="FunFam" id="3.40.30.10:FF:000042">
    <property type="entry name" value="protein disulfide-isomerase A2"/>
    <property type="match status" value="1"/>
</dbReference>
<dbReference type="Gene3D" id="3.40.30.10">
    <property type="entry name" value="Glutaredoxin"/>
    <property type="match status" value="4"/>
</dbReference>
<dbReference type="InterPro" id="IPR005788">
    <property type="entry name" value="PDI_thioredoxin-like_dom"/>
</dbReference>
<dbReference type="InterPro" id="IPR005792">
    <property type="entry name" value="Prot_disulphide_isomerase"/>
</dbReference>
<dbReference type="InterPro" id="IPR036249">
    <property type="entry name" value="Thioredoxin-like_sf"/>
</dbReference>
<dbReference type="InterPro" id="IPR017937">
    <property type="entry name" value="Thioredoxin_CS"/>
</dbReference>
<dbReference type="InterPro" id="IPR013766">
    <property type="entry name" value="Thioredoxin_domain"/>
</dbReference>
<dbReference type="NCBIfam" id="TIGR01130">
    <property type="entry name" value="ER_PDI_fam"/>
    <property type="match status" value="1"/>
</dbReference>
<dbReference type="NCBIfam" id="TIGR01126">
    <property type="entry name" value="pdi_dom"/>
    <property type="match status" value="1"/>
</dbReference>
<dbReference type="PANTHER" id="PTHR18929">
    <property type="entry name" value="PROTEIN DISULFIDE ISOMERASE"/>
    <property type="match status" value="1"/>
</dbReference>
<dbReference type="PANTHER" id="PTHR18929:SF246">
    <property type="entry name" value="PROTEIN DISULFIDE ISOMERASE-LIKE 1-4"/>
    <property type="match status" value="1"/>
</dbReference>
<dbReference type="Pfam" id="PF00085">
    <property type="entry name" value="Thioredoxin"/>
    <property type="match status" value="2"/>
</dbReference>
<dbReference type="Pfam" id="PF13848">
    <property type="entry name" value="Thioredoxin_6"/>
    <property type="match status" value="1"/>
</dbReference>
<dbReference type="PRINTS" id="PR00421">
    <property type="entry name" value="THIOREDOXIN"/>
</dbReference>
<dbReference type="SUPFAM" id="SSF52833">
    <property type="entry name" value="Thioredoxin-like"/>
    <property type="match status" value="4"/>
</dbReference>
<dbReference type="PROSITE" id="PS00014">
    <property type="entry name" value="ER_TARGET"/>
    <property type="match status" value="1"/>
</dbReference>
<dbReference type="PROSITE" id="PS00194">
    <property type="entry name" value="THIOREDOXIN_1"/>
    <property type="match status" value="2"/>
</dbReference>
<dbReference type="PROSITE" id="PS51352">
    <property type="entry name" value="THIOREDOXIN_2"/>
    <property type="match status" value="2"/>
</dbReference>